<organism>
    <name type="scientific">Macaca ochreata</name>
    <name type="common">Booted macaque</name>
    <dbReference type="NCBI Taxonomy" id="90385"/>
    <lineage>
        <taxon>Eukaryota</taxon>
        <taxon>Metazoa</taxon>
        <taxon>Chordata</taxon>
        <taxon>Craniata</taxon>
        <taxon>Vertebrata</taxon>
        <taxon>Euteleostomi</taxon>
        <taxon>Mammalia</taxon>
        <taxon>Eutheria</taxon>
        <taxon>Euarchontoglires</taxon>
        <taxon>Primates</taxon>
        <taxon>Haplorrhini</taxon>
        <taxon>Catarrhini</taxon>
        <taxon>Cercopithecidae</taxon>
        <taxon>Cercopithecinae</taxon>
        <taxon>Macaca</taxon>
    </lineage>
</organism>
<comment type="function">
    <text evidence="1">Core subunit of the mitochondrial membrane respiratory chain NADH dehydrogenase (Complex I) which catalyzes electron transfer from NADH through the respiratory chain, using ubiquinone as an electron acceptor. Part of the enzyme membrane arm which is embedded in the lipid bilayer and involved in proton translocation.</text>
</comment>
<comment type="catalytic activity">
    <reaction evidence="1">
        <text>a ubiquinone + NADH + 5 H(+)(in) = a ubiquinol + NAD(+) + 4 H(+)(out)</text>
        <dbReference type="Rhea" id="RHEA:29091"/>
        <dbReference type="Rhea" id="RHEA-COMP:9565"/>
        <dbReference type="Rhea" id="RHEA-COMP:9566"/>
        <dbReference type="ChEBI" id="CHEBI:15378"/>
        <dbReference type="ChEBI" id="CHEBI:16389"/>
        <dbReference type="ChEBI" id="CHEBI:17976"/>
        <dbReference type="ChEBI" id="CHEBI:57540"/>
        <dbReference type="ChEBI" id="CHEBI:57945"/>
        <dbReference type="EC" id="7.1.1.2"/>
    </reaction>
    <physiologicalReaction direction="left-to-right" evidence="1">
        <dbReference type="Rhea" id="RHEA:29092"/>
    </physiologicalReaction>
</comment>
<comment type="subunit">
    <text evidence="2">Core subunit of respiratory chain NADH dehydrogenase (Complex I) which is composed of 45 different subunits.</text>
</comment>
<comment type="subcellular location">
    <subcellularLocation>
        <location evidence="2">Mitochondrion inner membrane</location>
        <topology evidence="3">Multi-pass membrane protein</topology>
    </subcellularLocation>
</comment>
<comment type="similarity">
    <text evidence="4">Belongs to the complex I subunit 4L family.</text>
</comment>
<name>NU4LM_MACOC</name>
<reference key="1">
    <citation type="journal article" date="1999" name="Biol. J. Linn. Soc. Lond.">
        <title>Origin of the Sulawesi macaques (Cercopithecidae: Macaca) as suggested by mitochondrial DNA phylogeny.</title>
        <authorList>
            <person name="Evans B.J."/>
            <person name="Morales J.C."/>
            <person name="Supriatna J."/>
            <person name="Melnick D.J."/>
        </authorList>
    </citation>
    <scope>NUCLEOTIDE SEQUENCE [GENOMIC DNA]</scope>
    <source>
        <strain>Isolate 575</strain>
        <strain>Isolate 704</strain>
    </source>
</reference>
<accession>Q9XL62</accession>
<accession>Q9XL64</accession>
<sequence length="98" mass="10830">MIPTYMNIMLAFTISLLGMLIYRSHLMASLLCLEGMMMSLFIMTTLIALNTRSPLTNIMPIILLVFAACEAAVGLALLVSISNTYGLDYIHNLNLLQC</sequence>
<keyword id="KW-0249">Electron transport</keyword>
<keyword id="KW-0472">Membrane</keyword>
<keyword id="KW-0496">Mitochondrion</keyword>
<keyword id="KW-0999">Mitochondrion inner membrane</keyword>
<keyword id="KW-0520">NAD</keyword>
<keyword id="KW-0679">Respiratory chain</keyword>
<keyword id="KW-1278">Translocase</keyword>
<keyword id="KW-0812">Transmembrane</keyword>
<keyword id="KW-1133">Transmembrane helix</keyword>
<keyword id="KW-0813">Transport</keyword>
<keyword id="KW-0830">Ubiquinone</keyword>
<gene>
    <name type="primary">MT-ND4L</name>
    <name type="synonym">MTND4L</name>
    <name type="synonym">NADH4L</name>
    <name type="synonym">ND4L</name>
</gene>
<dbReference type="EC" id="7.1.1.2"/>
<dbReference type="EMBL" id="AF091423">
    <property type="protein sequence ID" value="AAD24734.1"/>
    <property type="molecule type" value="Genomic_DNA"/>
</dbReference>
<dbReference type="EMBL" id="AF091424">
    <property type="protein sequence ID" value="AAD24736.1"/>
    <property type="molecule type" value="Genomic_DNA"/>
</dbReference>
<dbReference type="SMR" id="Q9XL62"/>
<dbReference type="GO" id="GO:0005743">
    <property type="term" value="C:mitochondrial inner membrane"/>
    <property type="evidence" value="ECO:0000250"/>
    <property type="project" value="UniProtKB"/>
</dbReference>
<dbReference type="GO" id="GO:0045271">
    <property type="term" value="C:respiratory chain complex I"/>
    <property type="evidence" value="ECO:0000250"/>
    <property type="project" value="UniProtKB"/>
</dbReference>
<dbReference type="GO" id="GO:0008137">
    <property type="term" value="F:NADH dehydrogenase (ubiquinone) activity"/>
    <property type="evidence" value="ECO:0000250"/>
    <property type="project" value="UniProtKB"/>
</dbReference>
<dbReference type="GO" id="GO:0042773">
    <property type="term" value="P:ATP synthesis coupled electron transport"/>
    <property type="evidence" value="ECO:0007669"/>
    <property type="project" value="InterPro"/>
</dbReference>
<dbReference type="FunFam" id="1.10.287.3510:FF:000002">
    <property type="entry name" value="NADH-ubiquinone oxidoreductase chain 4L"/>
    <property type="match status" value="1"/>
</dbReference>
<dbReference type="Gene3D" id="1.10.287.3510">
    <property type="match status" value="1"/>
</dbReference>
<dbReference type="InterPro" id="IPR001133">
    <property type="entry name" value="NADH_UbQ_OxRdtase_chain4L/K"/>
</dbReference>
<dbReference type="InterPro" id="IPR039428">
    <property type="entry name" value="NUOK/Mnh_C1-like"/>
</dbReference>
<dbReference type="PANTHER" id="PTHR11434:SF0">
    <property type="entry name" value="NADH-UBIQUINONE OXIDOREDUCTASE CHAIN 4L"/>
    <property type="match status" value="1"/>
</dbReference>
<dbReference type="PANTHER" id="PTHR11434">
    <property type="entry name" value="NADH-UBIQUINONE OXIDOREDUCTASE SUBUNIT ND4L"/>
    <property type="match status" value="1"/>
</dbReference>
<dbReference type="Pfam" id="PF00420">
    <property type="entry name" value="Oxidored_q2"/>
    <property type="match status" value="1"/>
</dbReference>
<proteinExistence type="inferred from homology"/>
<feature type="chain" id="PRO_0000118443" description="NADH-ubiquinone oxidoreductase chain 4L">
    <location>
        <begin position="1"/>
        <end position="98"/>
    </location>
</feature>
<feature type="transmembrane region" description="Helical" evidence="3">
    <location>
        <begin position="1"/>
        <end position="21"/>
    </location>
</feature>
<feature type="transmembrane region" description="Helical" evidence="3">
    <location>
        <begin position="29"/>
        <end position="49"/>
    </location>
</feature>
<feature type="transmembrane region" description="Helical" evidence="3">
    <location>
        <begin position="61"/>
        <end position="81"/>
    </location>
</feature>
<feature type="sequence variant" description="In strain: Isolate 704.">
    <original>M</original>
    <variation>V</variation>
    <location>
        <position position="9"/>
    </location>
</feature>
<feature type="sequence variant" description="In strain: Isolate 704.">
    <original>R</original>
    <variation>H</variation>
    <location>
        <position position="52"/>
    </location>
</feature>
<feature type="sequence variant" description="In strain: Isolate 704.">
    <original>N</original>
    <variation>S</variation>
    <location>
        <position position="94"/>
    </location>
</feature>
<geneLocation type="mitochondrion"/>
<protein>
    <recommendedName>
        <fullName>NADH-ubiquinone oxidoreductase chain 4L</fullName>
        <ecNumber>7.1.1.2</ecNumber>
    </recommendedName>
    <alternativeName>
        <fullName>NADH dehydrogenase subunit 4L</fullName>
    </alternativeName>
</protein>
<evidence type="ECO:0000250" key="1">
    <source>
        <dbReference type="UniProtKB" id="P03901"/>
    </source>
</evidence>
<evidence type="ECO:0000250" key="2">
    <source>
        <dbReference type="UniProtKB" id="P03902"/>
    </source>
</evidence>
<evidence type="ECO:0000255" key="3"/>
<evidence type="ECO:0000305" key="4"/>